<organism>
    <name type="scientific">Salmonella newport (strain SL254)</name>
    <dbReference type="NCBI Taxonomy" id="423368"/>
    <lineage>
        <taxon>Bacteria</taxon>
        <taxon>Pseudomonadati</taxon>
        <taxon>Pseudomonadota</taxon>
        <taxon>Gammaproteobacteria</taxon>
        <taxon>Enterobacterales</taxon>
        <taxon>Enterobacteriaceae</taxon>
        <taxon>Salmonella</taxon>
    </lineage>
</organism>
<dbReference type="EC" id="3.2.1.28" evidence="1"/>
<dbReference type="EMBL" id="CP001113">
    <property type="protein sequence ID" value="ACF63803.1"/>
    <property type="molecule type" value="Genomic_DNA"/>
</dbReference>
<dbReference type="RefSeq" id="WP_000612815.1">
    <property type="nucleotide sequence ID" value="NZ_CCMR01000003.1"/>
</dbReference>
<dbReference type="SMR" id="B4SUI9"/>
<dbReference type="CAZy" id="GH37">
    <property type="family name" value="Glycoside Hydrolase Family 37"/>
</dbReference>
<dbReference type="KEGG" id="see:SNSL254_A1934"/>
<dbReference type="HOGENOM" id="CLU_006451_3_1_6"/>
<dbReference type="Proteomes" id="UP000008824">
    <property type="component" value="Chromosome"/>
</dbReference>
<dbReference type="GO" id="GO:0042597">
    <property type="term" value="C:periplasmic space"/>
    <property type="evidence" value="ECO:0007669"/>
    <property type="project" value="UniProtKB-SubCell"/>
</dbReference>
<dbReference type="GO" id="GO:0004555">
    <property type="term" value="F:alpha,alpha-trehalase activity"/>
    <property type="evidence" value="ECO:0007669"/>
    <property type="project" value="UniProtKB-UniRule"/>
</dbReference>
<dbReference type="GO" id="GO:0071474">
    <property type="term" value="P:cellular hyperosmotic response"/>
    <property type="evidence" value="ECO:0007669"/>
    <property type="project" value="InterPro"/>
</dbReference>
<dbReference type="GO" id="GO:0005993">
    <property type="term" value="P:trehalose catabolic process"/>
    <property type="evidence" value="ECO:0007669"/>
    <property type="project" value="InterPro"/>
</dbReference>
<dbReference type="FunFam" id="1.50.10.10:FF:000003">
    <property type="entry name" value="Cytoplasmic trehalase"/>
    <property type="match status" value="1"/>
</dbReference>
<dbReference type="Gene3D" id="1.50.10.10">
    <property type="match status" value="1"/>
</dbReference>
<dbReference type="HAMAP" id="MF_01060">
    <property type="entry name" value="Peripl_trehalase"/>
    <property type="match status" value="1"/>
</dbReference>
<dbReference type="InterPro" id="IPR008928">
    <property type="entry name" value="6-hairpin_glycosidase_sf"/>
</dbReference>
<dbReference type="InterPro" id="IPR012341">
    <property type="entry name" value="6hp_glycosidase-like_sf"/>
</dbReference>
<dbReference type="InterPro" id="IPR001661">
    <property type="entry name" value="Glyco_hydro_37"/>
</dbReference>
<dbReference type="InterPro" id="IPR018232">
    <property type="entry name" value="Glyco_hydro_37_CS"/>
</dbReference>
<dbReference type="InterPro" id="IPR023720">
    <property type="entry name" value="Trehalase_periplasmic"/>
</dbReference>
<dbReference type="NCBIfam" id="NF009773">
    <property type="entry name" value="PRK13270.1"/>
    <property type="match status" value="1"/>
</dbReference>
<dbReference type="NCBIfam" id="NF009774">
    <property type="entry name" value="PRK13271.1"/>
    <property type="match status" value="1"/>
</dbReference>
<dbReference type="PANTHER" id="PTHR23403">
    <property type="entry name" value="TREHALASE"/>
    <property type="match status" value="1"/>
</dbReference>
<dbReference type="PANTHER" id="PTHR23403:SF1">
    <property type="entry name" value="TREHALASE"/>
    <property type="match status" value="1"/>
</dbReference>
<dbReference type="Pfam" id="PF01204">
    <property type="entry name" value="Trehalase"/>
    <property type="match status" value="1"/>
</dbReference>
<dbReference type="PRINTS" id="PR00744">
    <property type="entry name" value="GLHYDRLASE37"/>
</dbReference>
<dbReference type="SUPFAM" id="SSF48208">
    <property type="entry name" value="Six-hairpin glycosidases"/>
    <property type="match status" value="1"/>
</dbReference>
<dbReference type="PROSITE" id="PS00927">
    <property type="entry name" value="TREHALASE_1"/>
    <property type="match status" value="1"/>
</dbReference>
<dbReference type="PROSITE" id="PS00928">
    <property type="entry name" value="TREHALASE_2"/>
    <property type="match status" value="1"/>
</dbReference>
<feature type="signal peptide" evidence="1">
    <location>
        <begin position="1"/>
        <end position="34"/>
    </location>
</feature>
<feature type="chain" id="PRO_1000136425" description="Periplasmic trehalase">
    <location>
        <begin position="35"/>
        <end position="570"/>
    </location>
</feature>
<feature type="region of interest" description="Disordered" evidence="2">
    <location>
        <begin position="544"/>
        <end position="570"/>
    </location>
</feature>
<feature type="compositionally biased region" description="Low complexity" evidence="2">
    <location>
        <begin position="554"/>
        <end position="570"/>
    </location>
</feature>
<feature type="active site" description="Proton donor/acceptor" evidence="1">
    <location>
        <position position="319"/>
    </location>
</feature>
<feature type="active site" description="Proton donor/acceptor" evidence="1">
    <location>
        <position position="503"/>
    </location>
</feature>
<feature type="binding site" evidence="1">
    <location>
        <position position="159"/>
    </location>
    <ligand>
        <name>substrate</name>
    </ligand>
</feature>
<feature type="binding site" evidence="1">
    <location>
        <begin position="166"/>
        <end position="167"/>
    </location>
    <ligand>
        <name>substrate</name>
    </ligand>
</feature>
<feature type="binding site" evidence="1">
    <location>
        <position position="203"/>
    </location>
    <ligand>
        <name>substrate</name>
    </ligand>
</feature>
<feature type="binding site" evidence="1">
    <location>
        <begin position="212"/>
        <end position="214"/>
    </location>
    <ligand>
        <name>substrate</name>
    </ligand>
</feature>
<feature type="binding site" evidence="1">
    <location>
        <begin position="284"/>
        <end position="286"/>
    </location>
    <ligand>
        <name>substrate</name>
    </ligand>
</feature>
<feature type="binding site" evidence="1">
    <location>
        <position position="317"/>
    </location>
    <ligand>
        <name>substrate</name>
    </ligand>
</feature>
<feature type="binding site" evidence="1">
    <location>
        <position position="518"/>
    </location>
    <ligand>
        <name>substrate</name>
    </ligand>
</feature>
<name>TREA_SALNS</name>
<reference key="1">
    <citation type="journal article" date="2011" name="J. Bacteriol.">
        <title>Comparative genomics of 28 Salmonella enterica isolates: evidence for CRISPR-mediated adaptive sublineage evolution.</title>
        <authorList>
            <person name="Fricke W.F."/>
            <person name="Mammel M.K."/>
            <person name="McDermott P.F."/>
            <person name="Tartera C."/>
            <person name="White D.G."/>
            <person name="Leclerc J.E."/>
            <person name="Ravel J."/>
            <person name="Cebula T.A."/>
        </authorList>
    </citation>
    <scope>NUCLEOTIDE SEQUENCE [LARGE SCALE GENOMIC DNA]</scope>
    <source>
        <strain>SL254</strain>
    </source>
</reference>
<sequence>MIPPEIRRSVLLQKAIKLALAGTLLTFASFSATAADPSSDTETPQPPDILLGPLFNDVQNAKLFPDQKTFADAIPNSDPLMILADYRMQRNQSGFDLRHFVDVNFTLPKAGEKYVPPAGQSLREHIDGLWPVLTRSTKNVEKWDSLLPLPESYVVPGGRFREIYYWDSYFTMLGLAESEHWDKVADMVANFGYEIDAWGHIPNGNRTYYLSRSQPPFFAFMVELLAQHEGDDALKEYLPQLQKEYAYWMEGVETLQPGQQNQRVVKLEDGSVLNRYWDDRDTPRPESWVEDIATAKSNPNRPATEIYRDLRSAAASGWDFSSRWMDNPQQLSTIRTTTIVPVDLNALLYQLEKTLARASAAAGDRAEASQYDALANARQKAIEMHLWNNKEGWYADYDLKNNKIRDQLTAAALFPLYVNAAAKDRAAKVAAAAQAHLLQPGGLATTSVKSGQQWDAPNGWAPLQWVAAEGLQNYGQDDVAMEVTWRFLTNVQHTYDREKKLVEKYDVSSTGTGGGGGEYPLQDGFGWTNGVTLKMLDLICPQEKPCDSVPSTRPASLSATPTKTPSAATQ</sequence>
<accession>B4SUI9</accession>
<protein>
    <recommendedName>
        <fullName evidence="1">Periplasmic trehalase</fullName>
        <ecNumber evidence="1">3.2.1.28</ecNumber>
    </recommendedName>
    <alternativeName>
        <fullName evidence="1">Alpha,alpha-trehalase</fullName>
    </alternativeName>
    <alternativeName>
        <fullName evidence="1">Alpha,alpha-trehalose glucohydrolase</fullName>
    </alternativeName>
</protein>
<proteinExistence type="inferred from homology"/>
<keyword id="KW-0326">Glycosidase</keyword>
<keyword id="KW-0378">Hydrolase</keyword>
<keyword id="KW-0574">Periplasm</keyword>
<keyword id="KW-0732">Signal</keyword>
<comment type="function">
    <text evidence="1">Provides the cells with the ability to utilize trehalose at high osmolarity by splitting it into glucose molecules that can subsequently be taken up by the phosphotransferase-mediated uptake system.</text>
</comment>
<comment type="catalytic activity">
    <reaction evidence="1">
        <text>alpha,alpha-trehalose + H2O = alpha-D-glucose + beta-D-glucose</text>
        <dbReference type="Rhea" id="RHEA:32675"/>
        <dbReference type="ChEBI" id="CHEBI:15377"/>
        <dbReference type="ChEBI" id="CHEBI:15903"/>
        <dbReference type="ChEBI" id="CHEBI:16551"/>
        <dbReference type="ChEBI" id="CHEBI:17925"/>
        <dbReference type="EC" id="3.2.1.28"/>
    </reaction>
</comment>
<comment type="subunit">
    <text evidence="1">Monomer.</text>
</comment>
<comment type="subcellular location">
    <subcellularLocation>
        <location evidence="1">Periplasm</location>
    </subcellularLocation>
</comment>
<comment type="similarity">
    <text evidence="1">Belongs to the glycosyl hydrolase 37 family.</text>
</comment>
<gene>
    <name evidence="1" type="primary">treA</name>
    <name type="ordered locus">SNSL254_A1934</name>
</gene>
<evidence type="ECO:0000255" key="1">
    <source>
        <dbReference type="HAMAP-Rule" id="MF_01060"/>
    </source>
</evidence>
<evidence type="ECO:0000256" key="2">
    <source>
        <dbReference type="SAM" id="MobiDB-lite"/>
    </source>
</evidence>